<gene>
    <name type="primary">PTGER1</name>
</gene>
<accession>P34995</accession>
<accession>Q5U5U4</accession>
<accession>Q86UH3</accession>
<accession>Q86VB5</accession>
<accession>Q8NHB2</accession>
<dbReference type="EMBL" id="L22647">
    <property type="protein sequence ID" value="AAC37539.1"/>
    <property type="molecule type" value="mRNA"/>
</dbReference>
<dbReference type="EMBL" id="AB065464">
    <property type="protein sequence ID" value="BAC05723.1"/>
    <property type="status" value="ALT_SEQ"/>
    <property type="molecule type" value="Genomic_DNA"/>
</dbReference>
<dbReference type="EMBL" id="AY275470">
    <property type="protein sequence ID" value="AAP32302.1"/>
    <property type="molecule type" value="mRNA"/>
</dbReference>
<dbReference type="EMBL" id="BC039034">
    <property type="protein sequence ID" value="AAH39034.1"/>
    <property type="molecule type" value="mRNA"/>
</dbReference>
<dbReference type="EMBL" id="BC051286">
    <property type="protein sequence ID" value="AAH51286.1"/>
    <property type="molecule type" value="mRNA"/>
</dbReference>
<dbReference type="CCDS" id="CCDS12309.1"/>
<dbReference type="PIR" id="A49690">
    <property type="entry name" value="A49690"/>
</dbReference>
<dbReference type="RefSeq" id="NP_000946.2">
    <property type="nucleotide sequence ID" value="NM_000955.2"/>
</dbReference>
<dbReference type="SMR" id="P34995"/>
<dbReference type="BioGRID" id="111703">
    <property type="interactions" value="4"/>
</dbReference>
<dbReference type="CORUM" id="P34995"/>
<dbReference type="FunCoup" id="P34995">
    <property type="interactions" value="1158"/>
</dbReference>
<dbReference type="STRING" id="9606.ENSP00000292513"/>
<dbReference type="BindingDB" id="P34995"/>
<dbReference type="ChEMBL" id="CHEMBL1811"/>
<dbReference type="DrugBank" id="DB00770">
    <property type="generic name" value="Alprostadil"/>
</dbReference>
<dbReference type="DrugBank" id="DB00905">
    <property type="generic name" value="Bimatoprost"/>
</dbReference>
<dbReference type="DrugBank" id="DB00297">
    <property type="generic name" value="Bupivacaine"/>
</dbReference>
<dbReference type="DrugBank" id="DB00429">
    <property type="generic name" value="Carboprost tromethamine"/>
</dbReference>
<dbReference type="DrugBank" id="DB11507">
    <property type="generic name" value="Cloprostenol"/>
</dbReference>
<dbReference type="DrugBank" id="DB12789">
    <property type="generic name" value="Dinoprost"/>
</dbReference>
<dbReference type="DrugBank" id="DB00917">
    <property type="generic name" value="Dinoprostone"/>
</dbReference>
<dbReference type="DrugBank" id="DB16148">
    <property type="generic name" value="Ecraprost"/>
</dbReference>
<dbReference type="DrugBank" id="DB01088">
    <property type="generic name" value="Iloprost"/>
</dbReference>
<dbReference type="DrugBank" id="DB09211">
    <property type="generic name" value="Limaprost"/>
</dbReference>
<dbReference type="DrugBank" id="DB00929">
    <property type="generic name" value="Misoprostol"/>
</dbReference>
<dbReference type="DrugBank" id="DB15071">
    <property type="generic name" value="Omidenepag isopropyl"/>
</dbReference>
<dbReference type="DrugBank" id="DB02056">
    <property type="generic name" value="Prostaglandin D2"/>
</dbReference>
<dbReference type="DrugBank" id="DB16315">
    <property type="generic name" value="Rivenprost"/>
</dbReference>
<dbReference type="DrugBank" id="DB04297">
    <property type="generic name" value="Trichostatin A"/>
</dbReference>
<dbReference type="DrugCentral" id="P34995"/>
<dbReference type="GuidetoPHARMACOLOGY" id="340"/>
<dbReference type="TCDB" id="9.A.14.9.1">
    <property type="family name" value="the g-protein-coupled receptor (gpcr) family"/>
</dbReference>
<dbReference type="GlyCosmos" id="P34995">
    <property type="glycosylation" value="2 sites, No reported glycans"/>
</dbReference>
<dbReference type="GlyGen" id="P34995">
    <property type="glycosylation" value="3 sites"/>
</dbReference>
<dbReference type="PhosphoSitePlus" id="P34995"/>
<dbReference type="BioMuta" id="PTGER1"/>
<dbReference type="DMDM" id="83287886"/>
<dbReference type="PaxDb" id="9606-ENSP00000292513"/>
<dbReference type="PeptideAtlas" id="P34995"/>
<dbReference type="Antibodypedia" id="13701">
    <property type="antibodies" value="255 antibodies from 31 providers"/>
</dbReference>
<dbReference type="DNASU" id="5731"/>
<dbReference type="Ensembl" id="ENST00000292513.4">
    <property type="protein sequence ID" value="ENSP00000292513.3"/>
    <property type="gene ID" value="ENSG00000160951.4"/>
</dbReference>
<dbReference type="GeneID" id="5731"/>
<dbReference type="KEGG" id="hsa:5731"/>
<dbReference type="MANE-Select" id="ENST00000292513.4">
    <property type="protein sequence ID" value="ENSP00000292513.3"/>
    <property type="RefSeq nucleotide sequence ID" value="NM_000955.3"/>
    <property type="RefSeq protein sequence ID" value="NP_000946.2"/>
</dbReference>
<dbReference type="UCSC" id="uc002mys.3">
    <property type="organism name" value="human"/>
</dbReference>
<dbReference type="AGR" id="HGNC:9593"/>
<dbReference type="CTD" id="5731"/>
<dbReference type="DisGeNET" id="5731"/>
<dbReference type="GeneCards" id="PTGER1"/>
<dbReference type="HGNC" id="HGNC:9593">
    <property type="gene designation" value="PTGER1"/>
</dbReference>
<dbReference type="HPA" id="ENSG00000160951">
    <property type="expression patterns" value="Tissue enriched (kidney)"/>
</dbReference>
<dbReference type="MIM" id="176802">
    <property type="type" value="gene"/>
</dbReference>
<dbReference type="neXtProt" id="NX_P34995"/>
<dbReference type="OpenTargets" id="ENSG00000160951"/>
<dbReference type="PharmGKB" id="PA286"/>
<dbReference type="VEuPathDB" id="HostDB:ENSG00000160951"/>
<dbReference type="eggNOG" id="KOG3656">
    <property type="taxonomic scope" value="Eukaryota"/>
</dbReference>
<dbReference type="GeneTree" id="ENSGT01030000234559"/>
<dbReference type="HOGENOM" id="CLU_045991_3_0_1"/>
<dbReference type="InParanoid" id="P34995"/>
<dbReference type="OMA" id="GMCQFLG"/>
<dbReference type="OrthoDB" id="5959154at2759"/>
<dbReference type="PAN-GO" id="P34995">
    <property type="GO annotations" value="5 GO annotations based on evolutionary models"/>
</dbReference>
<dbReference type="PhylomeDB" id="P34995"/>
<dbReference type="TreeFam" id="TF324982"/>
<dbReference type="PathwayCommons" id="P34995"/>
<dbReference type="Reactome" id="R-HSA-391908">
    <property type="pathway name" value="Prostanoid ligand receptors"/>
</dbReference>
<dbReference type="Reactome" id="R-HSA-416476">
    <property type="pathway name" value="G alpha (q) signalling events"/>
</dbReference>
<dbReference type="SignaLink" id="P34995"/>
<dbReference type="SIGNOR" id="P34995"/>
<dbReference type="BioGRID-ORCS" id="5731">
    <property type="hits" value="12 hits in 1156 CRISPR screens"/>
</dbReference>
<dbReference type="GeneWiki" id="EP1_receptor"/>
<dbReference type="GenomeRNAi" id="5731"/>
<dbReference type="Pharos" id="P34995">
    <property type="development level" value="Tclin"/>
</dbReference>
<dbReference type="PRO" id="PR:P34995"/>
<dbReference type="Proteomes" id="UP000005640">
    <property type="component" value="Chromosome 19"/>
</dbReference>
<dbReference type="RNAct" id="P34995">
    <property type="molecule type" value="protein"/>
</dbReference>
<dbReference type="Bgee" id="ENSG00000160951">
    <property type="expression patterns" value="Expressed in metanephros cortex and 96 other cell types or tissues"/>
</dbReference>
<dbReference type="GO" id="GO:0005886">
    <property type="term" value="C:plasma membrane"/>
    <property type="evidence" value="ECO:0000314"/>
    <property type="project" value="UniProt"/>
</dbReference>
<dbReference type="GO" id="GO:0031748">
    <property type="term" value="F:D1 dopamine receptor binding"/>
    <property type="evidence" value="ECO:0007669"/>
    <property type="project" value="Ensembl"/>
</dbReference>
<dbReference type="GO" id="GO:0004957">
    <property type="term" value="F:prostaglandin E receptor activity"/>
    <property type="evidence" value="ECO:0000314"/>
    <property type="project" value="UniProt"/>
</dbReference>
<dbReference type="GO" id="GO:0007191">
    <property type="term" value="P:adenylate cyclase-activating dopamine receptor signaling pathway"/>
    <property type="evidence" value="ECO:0007669"/>
    <property type="project" value="Ensembl"/>
</dbReference>
<dbReference type="GO" id="GO:0007189">
    <property type="term" value="P:adenylate cyclase-activating G protein-coupled receptor signaling pathway"/>
    <property type="evidence" value="ECO:0000318"/>
    <property type="project" value="GO_Central"/>
</dbReference>
<dbReference type="GO" id="GO:0007186">
    <property type="term" value="P:G protein-coupled receptor signaling pathway"/>
    <property type="evidence" value="ECO:0000304"/>
    <property type="project" value="ProtInc"/>
</dbReference>
<dbReference type="GO" id="GO:0006954">
    <property type="term" value="P:inflammatory response"/>
    <property type="evidence" value="ECO:0000318"/>
    <property type="project" value="GO_Central"/>
</dbReference>
<dbReference type="GO" id="GO:0007200">
    <property type="term" value="P:phospholipase C-activating G protein-coupled receptor signaling pathway"/>
    <property type="evidence" value="ECO:0000304"/>
    <property type="project" value="UniProt"/>
</dbReference>
<dbReference type="GO" id="GO:0007204">
    <property type="term" value="P:positive regulation of cytosolic calcium ion concentration"/>
    <property type="evidence" value="ECO:0000318"/>
    <property type="project" value="GO_Central"/>
</dbReference>
<dbReference type="GO" id="GO:0032496">
    <property type="term" value="P:response to lipopolysaccharide"/>
    <property type="evidence" value="ECO:0007669"/>
    <property type="project" value="Ensembl"/>
</dbReference>
<dbReference type="GO" id="GO:0034695">
    <property type="term" value="P:response to prostaglandin E"/>
    <property type="evidence" value="ECO:0000314"/>
    <property type="project" value="UniProt"/>
</dbReference>
<dbReference type="FunFam" id="1.20.1070.10:FF:000253">
    <property type="entry name" value="prostaglandin E2 receptor EP1 subtype"/>
    <property type="match status" value="1"/>
</dbReference>
<dbReference type="Gene3D" id="1.20.1070.10">
    <property type="entry name" value="Rhodopsin 7-helix transmembrane proteins"/>
    <property type="match status" value="1"/>
</dbReference>
<dbReference type="InterPro" id="IPR000276">
    <property type="entry name" value="GPCR_Rhodpsn"/>
</dbReference>
<dbReference type="InterPro" id="IPR017452">
    <property type="entry name" value="GPCR_Rhodpsn_7TM"/>
</dbReference>
<dbReference type="InterPro" id="IPR008365">
    <property type="entry name" value="Prostanoid_rcpt"/>
</dbReference>
<dbReference type="InterPro" id="IPR001244">
    <property type="entry name" value="Prostglndn_DP_rcpt"/>
</dbReference>
<dbReference type="InterPro" id="IPR000708">
    <property type="entry name" value="Prostglndn_EP1_rcpt"/>
</dbReference>
<dbReference type="PANTHER" id="PTHR11866">
    <property type="entry name" value="G-PROTEIN COUPLED RECEPTOR FAMILY 1 MEMBER"/>
    <property type="match status" value="1"/>
</dbReference>
<dbReference type="PANTHER" id="PTHR11866:SF3">
    <property type="entry name" value="PROSTAGLANDIN E2 RECEPTOR EP1 SUBTYPE"/>
    <property type="match status" value="1"/>
</dbReference>
<dbReference type="Pfam" id="PF00001">
    <property type="entry name" value="7tm_1"/>
    <property type="match status" value="1"/>
</dbReference>
<dbReference type="PRINTS" id="PR00428">
    <property type="entry name" value="PROSTAGLNDNR"/>
</dbReference>
<dbReference type="PRINTS" id="PR01788">
    <property type="entry name" value="PROSTANOIDR"/>
</dbReference>
<dbReference type="PRINTS" id="PR00580">
    <property type="entry name" value="PRSTNOIDEP1R"/>
</dbReference>
<dbReference type="SUPFAM" id="SSF81321">
    <property type="entry name" value="Family A G protein-coupled receptor-like"/>
    <property type="match status" value="1"/>
</dbReference>
<dbReference type="PROSITE" id="PS00237">
    <property type="entry name" value="G_PROTEIN_RECEP_F1_1"/>
    <property type="match status" value="1"/>
</dbReference>
<dbReference type="PROSITE" id="PS50262">
    <property type="entry name" value="G_PROTEIN_RECEP_F1_2"/>
    <property type="match status" value="1"/>
</dbReference>
<reference key="1">
    <citation type="journal article" date="1993" name="J. Biol. Chem.">
        <title>Cloning and expression of a cDNA for the human prostaglandin E receptor EP1 subtype.</title>
        <authorList>
            <person name="Funk C.D."/>
            <person name="Furci L."/>
            <person name="Fitzgerald G.A."/>
            <person name="Grygorczyk R."/>
            <person name="Rochette C."/>
            <person name="Bayne M.A."/>
            <person name="Abramovitz M."/>
            <person name="Adam M."/>
            <person name="Metters K.M."/>
        </authorList>
    </citation>
    <scope>NUCLEOTIDE SEQUENCE [MRNA]</scope>
    <scope>VARIANT THR-71</scope>
</reference>
<reference key="2">
    <citation type="submission" date="2001-07" db="EMBL/GenBank/DDBJ databases">
        <title>Genome-wide discovery and analysis of human seven transmembrane helix receptor genes.</title>
        <authorList>
            <person name="Suwa M."/>
            <person name="Sato T."/>
            <person name="Okouchi I."/>
            <person name="Arita M."/>
            <person name="Futami K."/>
            <person name="Matsumoto S."/>
            <person name="Tsutsumi S."/>
            <person name="Aburatani H."/>
            <person name="Asai K."/>
            <person name="Akiyama Y."/>
        </authorList>
    </citation>
    <scope>NUCLEOTIDE SEQUENCE [GENOMIC DNA]</scope>
</reference>
<reference key="3">
    <citation type="submission" date="2003-04" db="EMBL/GenBank/DDBJ databases">
        <title>cDNA clones of human proteins involved in signal transduction sequenced by the Guthrie cDNA resource center (www.cdna.org).</title>
        <authorList>
            <person name="Warren C.N."/>
            <person name="Aronstam R.S."/>
            <person name="Sharma S.V."/>
        </authorList>
    </citation>
    <scope>NUCLEOTIDE SEQUENCE [LARGE SCALE MRNA]</scope>
    <scope>VARIANT THR-71</scope>
    <source>
        <tissue>Kidney</tissue>
    </source>
</reference>
<reference key="4">
    <citation type="journal article" date="2004" name="Genome Res.">
        <title>The status, quality, and expansion of the NIH full-length cDNA project: the Mammalian Gene Collection (MGC).</title>
        <authorList>
            <consortium name="The MGC Project Team"/>
        </authorList>
    </citation>
    <scope>NUCLEOTIDE SEQUENCE [LARGE SCALE MRNA]</scope>
    <source>
        <tissue>Ovary</tissue>
        <tissue>Pancreas</tissue>
    </source>
</reference>
<sequence length="402" mass="41801">MSPCGPLNLSLAGEATTCAAPWVPNTSAVPPSGASPALPIFSMTLGAVSNLLALALLAQAAGRLRRRRSAATFLLFVASLLATDLAGHVIPGALVLRLYTAGRAPAGGACHFLGGCMVFFGLCPLLLGCGMAVERCVGVTRPLLHAARVSVARARLALAAVAAVALAVALLPLARVGRYELQYPGTWCFIGLGPPGGWRQALLAGLFASLGLVALLAALVCNTLSGLALLRARWRRRSRRPPPASGPDSRRRWGAHGPRSASASSASSIASASTFFGGSRSSGSARRARAHDVEMVGQLVGIMVVSCICWSPMLVLVALAVGGWSSTSLQRPLFLAVRLASWNQILDPWVYILLRQAVLRQLLRLLPPRAGAKGGPAGLGLTPSAWEASSLRSSRHSGLSHF</sequence>
<organism>
    <name type="scientific">Homo sapiens</name>
    <name type="common">Human</name>
    <dbReference type="NCBI Taxonomy" id="9606"/>
    <lineage>
        <taxon>Eukaryota</taxon>
        <taxon>Metazoa</taxon>
        <taxon>Chordata</taxon>
        <taxon>Craniata</taxon>
        <taxon>Vertebrata</taxon>
        <taxon>Euteleostomi</taxon>
        <taxon>Mammalia</taxon>
        <taxon>Eutheria</taxon>
        <taxon>Euarchontoglires</taxon>
        <taxon>Primates</taxon>
        <taxon>Haplorrhini</taxon>
        <taxon>Catarrhini</taxon>
        <taxon>Hominidae</taxon>
        <taxon>Homo</taxon>
    </lineage>
</organism>
<evidence type="ECO:0000255" key="1"/>
<evidence type="ECO:0000255" key="2">
    <source>
        <dbReference type="PROSITE-ProRule" id="PRU00521"/>
    </source>
</evidence>
<evidence type="ECO:0000256" key="3">
    <source>
        <dbReference type="SAM" id="MobiDB-lite"/>
    </source>
</evidence>
<evidence type="ECO:0000269" key="4">
    <source>
    </source>
</evidence>
<evidence type="ECO:0000269" key="5">
    <source ref="3"/>
</evidence>
<evidence type="ECO:0000305" key="6"/>
<comment type="function">
    <text>Receptor for prostaglandin E2 (PGE2). The activity of this receptor is mediated by G(q) proteins which activate a phosphatidylinositol-calcium second messenger system. May play a role as an important modulator of renal function. Implicated the smooth muscle contractile response to PGE2 in various tissues.</text>
</comment>
<comment type="subcellular location">
    <subcellularLocation>
        <location>Cell membrane</location>
        <topology>Multi-pass membrane protein</topology>
    </subcellularLocation>
</comment>
<comment type="tissue specificity">
    <text>Abundant in kidney. Lower level expression in lung, skeletal muscle and spleen, lowest expression in testis and not detected in liver brain and heart.</text>
</comment>
<comment type="PTM">
    <text evidence="6">Phosphorylated.</text>
</comment>
<comment type="similarity">
    <text evidence="2">Belongs to the G-protein coupled receptor 1 family.</text>
</comment>
<comment type="sequence caution" evidence="6">
    <conflict type="erroneous gene model prediction">
        <sequence resource="EMBL-CDS" id="BAC05723"/>
    </conflict>
</comment>
<keyword id="KW-1003">Cell membrane</keyword>
<keyword id="KW-1015">Disulfide bond</keyword>
<keyword id="KW-0297">G-protein coupled receptor</keyword>
<keyword id="KW-0325">Glycoprotein</keyword>
<keyword id="KW-0472">Membrane</keyword>
<keyword id="KW-0597">Phosphoprotein</keyword>
<keyword id="KW-0675">Receptor</keyword>
<keyword id="KW-1185">Reference proteome</keyword>
<keyword id="KW-0807">Transducer</keyword>
<keyword id="KW-0812">Transmembrane</keyword>
<keyword id="KW-1133">Transmembrane helix</keyword>
<feature type="chain" id="PRO_0000070050" description="Prostaglandin E2 receptor EP1 subtype">
    <location>
        <begin position="1"/>
        <end position="402"/>
    </location>
</feature>
<feature type="topological domain" description="Extracellular" evidence="1">
    <location>
        <begin position="1"/>
        <end position="35"/>
    </location>
</feature>
<feature type="transmembrane region" description="Helical; Name=1" evidence="1">
    <location>
        <begin position="36"/>
        <end position="62"/>
    </location>
</feature>
<feature type="topological domain" description="Cytoplasmic" evidence="1">
    <location>
        <begin position="63"/>
        <end position="72"/>
    </location>
</feature>
<feature type="transmembrane region" description="Helical; Name=2" evidence="1">
    <location>
        <begin position="73"/>
        <end position="96"/>
    </location>
</feature>
<feature type="topological domain" description="Extracellular" evidence="1">
    <location>
        <begin position="97"/>
        <end position="111"/>
    </location>
</feature>
<feature type="transmembrane region" description="Helical; Name=3" evidence="1">
    <location>
        <begin position="112"/>
        <end position="133"/>
    </location>
</feature>
<feature type="topological domain" description="Cytoplasmic" evidence="1">
    <location>
        <begin position="134"/>
        <end position="155"/>
    </location>
</feature>
<feature type="transmembrane region" description="Helical; Name=4" evidence="1">
    <location>
        <begin position="156"/>
        <end position="177"/>
    </location>
</feature>
<feature type="topological domain" description="Extracellular" evidence="1">
    <location>
        <begin position="178"/>
        <end position="201"/>
    </location>
</feature>
<feature type="transmembrane region" description="Helical; Name=5" evidence="1">
    <location>
        <begin position="202"/>
        <end position="227"/>
    </location>
</feature>
<feature type="topological domain" description="Cytoplasmic" evidence="1">
    <location>
        <begin position="228"/>
        <end position="294"/>
    </location>
</feature>
<feature type="transmembrane region" description="Helical; Name=6" evidence="1">
    <location>
        <begin position="295"/>
        <end position="321"/>
    </location>
</feature>
<feature type="topological domain" description="Extracellular" evidence="1">
    <location>
        <begin position="322"/>
        <end position="332"/>
    </location>
</feature>
<feature type="transmembrane region" description="Helical; Name=7" evidence="1">
    <location>
        <begin position="333"/>
        <end position="354"/>
    </location>
</feature>
<feature type="topological domain" description="Cytoplasmic" evidence="1">
    <location>
        <begin position="355"/>
        <end position="402"/>
    </location>
</feature>
<feature type="region of interest" description="Disordered" evidence="3">
    <location>
        <begin position="238"/>
        <end position="266"/>
    </location>
</feature>
<feature type="glycosylation site" description="N-linked (GlcNAc...) asparagine" evidence="1">
    <location>
        <position position="8"/>
    </location>
</feature>
<feature type="glycosylation site" description="N-linked (GlcNAc...) asparagine" evidence="1">
    <location>
        <position position="25"/>
    </location>
</feature>
<feature type="disulfide bond" evidence="2">
    <location>
        <begin position="110"/>
        <end position="188"/>
    </location>
</feature>
<feature type="sequence variant" id="VAR_017190" description="In dbSNP:rs1057362." evidence="4 5">
    <original>A</original>
    <variation>T</variation>
    <location>
        <position position="71"/>
    </location>
</feature>
<feature type="sequence variant" id="VAR_029216" description="In dbSNP:rs28364042.">
    <original>T</original>
    <variation>M</variation>
    <location>
        <position position="223"/>
    </location>
</feature>
<feature type="sequence variant" id="VAR_029217" description="In dbSNP:rs7249305.">
    <original>H</original>
    <variation>R</variation>
    <location>
        <position position="256"/>
    </location>
</feature>
<feature type="sequence conflict" description="In Ref. 1; AAC37539." evidence="6" ref="1">
    <original>L</original>
    <variation>H</variation>
    <location>
        <position position="230"/>
    </location>
</feature>
<proteinExistence type="evidence at transcript level"/>
<protein>
    <recommendedName>
        <fullName>Prostaglandin E2 receptor EP1 subtype</fullName>
        <shortName>PGE receptor EP1 subtype</shortName>
        <shortName>PGE2 receptor EP1 subtype</shortName>
    </recommendedName>
    <alternativeName>
        <fullName>Prostanoid EP1 receptor</fullName>
    </alternativeName>
</protein>
<name>PE2R1_HUMAN</name>